<dbReference type="EMBL" id="AM746676">
    <property type="protein sequence ID" value="CAN92148.1"/>
    <property type="molecule type" value="Genomic_DNA"/>
</dbReference>
<dbReference type="RefSeq" id="WP_012234624.1">
    <property type="nucleotide sequence ID" value="NC_010162.1"/>
</dbReference>
<dbReference type="SMR" id="A9FQE0"/>
<dbReference type="STRING" id="448385.sce1989"/>
<dbReference type="KEGG" id="scl:sce1989"/>
<dbReference type="eggNOG" id="COG0087">
    <property type="taxonomic scope" value="Bacteria"/>
</dbReference>
<dbReference type="HOGENOM" id="CLU_044142_4_1_7"/>
<dbReference type="OrthoDB" id="9806135at2"/>
<dbReference type="BioCyc" id="SCEL448385:SCE_RS10200-MONOMER"/>
<dbReference type="Proteomes" id="UP000002139">
    <property type="component" value="Chromosome"/>
</dbReference>
<dbReference type="GO" id="GO:0022625">
    <property type="term" value="C:cytosolic large ribosomal subunit"/>
    <property type="evidence" value="ECO:0007669"/>
    <property type="project" value="TreeGrafter"/>
</dbReference>
<dbReference type="GO" id="GO:0019843">
    <property type="term" value="F:rRNA binding"/>
    <property type="evidence" value="ECO:0007669"/>
    <property type="project" value="UniProtKB-UniRule"/>
</dbReference>
<dbReference type="GO" id="GO:0003735">
    <property type="term" value="F:structural constituent of ribosome"/>
    <property type="evidence" value="ECO:0007669"/>
    <property type="project" value="InterPro"/>
</dbReference>
<dbReference type="GO" id="GO:0006412">
    <property type="term" value="P:translation"/>
    <property type="evidence" value="ECO:0007669"/>
    <property type="project" value="UniProtKB-UniRule"/>
</dbReference>
<dbReference type="FunFam" id="2.40.30.10:FF:000004">
    <property type="entry name" value="50S ribosomal protein L3"/>
    <property type="match status" value="1"/>
</dbReference>
<dbReference type="FunFam" id="3.30.160.810:FF:000001">
    <property type="entry name" value="50S ribosomal protein L3"/>
    <property type="match status" value="1"/>
</dbReference>
<dbReference type="Gene3D" id="3.30.160.810">
    <property type="match status" value="1"/>
</dbReference>
<dbReference type="Gene3D" id="2.40.30.10">
    <property type="entry name" value="Translation factors"/>
    <property type="match status" value="1"/>
</dbReference>
<dbReference type="HAMAP" id="MF_01325_B">
    <property type="entry name" value="Ribosomal_uL3_B"/>
    <property type="match status" value="1"/>
</dbReference>
<dbReference type="InterPro" id="IPR000597">
    <property type="entry name" value="Ribosomal_uL3"/>
</dbReference>
<dbReference type="InterPro" id="IPR019927">
    <property type="entry name" value="Ribosomal_uL3_bac/org-type"/>
</dbReference>
<dbReference type="InterPro" id="IPR019926">
    <property type="entry name" value="Ribosomal_uL3_CS"/>
</dbReference>
<dbReference type="InterPro" id="IPR009000">
    <property type="entry name" value="Transl_B-barrel_sf"/>
</dbReference>
<dbReference type="NCBIfam" id="TIGR03625">
    <property type="entry name" value="L3_bact"/>
    <property type="match status" value="1"/>
</dbReference>
<dbReference type="PANTHER" id="PTHR11229">
    <property type="entry name" value="50S RIBOSOMAL PROTEIN L3"/>
    <property type="match status" value="1"/>
</dbReference>
<dbReference type="PANTHER" id="PTHR11229:SF16">
    <property type="entry name" value="LARGE RIBOSOMAL SUBUNIT PROTEIN UL3C"/>
    <property type="match status" value="1"/>
</dbReference>
<dbReference type="Pfam" id="PF00297">
    <property type="entry name" value="Ribosomal_L3"/>
    <property type="match status" value="1"/>
</dbReference>
<dbReference type="SUPFAM" id="SSF50447">
    <property type="entry name" value="Translation proteins"/>
    <property type="match status" value="1"/>
</dbReference>
<dbReference type="PROSITE" id="PS00474">
    <property type="entry name" value="RIBOSOMAL_L3"/>
    <property type="match status" value="1"/>
</dbReference>
<organism>
    <name type="scientific">Sorangium cellulosum (strain So ce56)</name>
    <name type="common">Polyangium cellulosum (strain So ce56)</name>
    <dbReference type="NCBI Taxonomy" id="448385"/>
    <lineage>
        <taxon>Bacteria</taxon>
        <taxon>Pseudomonadati</taxon>
        <taxon>Myxococcota</taxon>
        <taxon>Polyangia</taxon>
        <taxon>Polyangiales</taxon>
        <taxon>Polyangiaceae</taxon>
        <taxon>Sorangium</taxon>
    </lineage>
</organism>
<feature type="chain" id="PRO_1000165903" description="Large ribosomal subunit protein uL3">
    <location>
        <begin position="1"/>
        <end position="232"/>
    </location>
</feature>
<gene>
    <name evidence="1" type="primary">rplC</name>
    <name type="ordered locus">sce1989</name>
</gene>
<comment type="function">
    <text evidence="1">One of the primary rRNA binding proteins, it binds directly near the 3'-end of the 23S rRNA, where it nucleates assembly of the 50S subunit.</text>
</comment>
<comment type="subunit">
    <text evidence="1">Part of the 50S ribosomal subunit. Forms a cluster with proteins L14 and L19.</text>
</comment>
<comment type="similarity">
    <text evidence="1">Belongs to the universal ribosomal protein uL3 family.</text>
</comment>
<sequence length="232" mass="24995">MNQHPGIIGKKIGMTQIFNETGEVLRCTVVQAGCVVIGKRTLEKDGYSALILGLGERAEKHTTKPVAGAYKKSGQTPKRIVRELRCSPEHAAKYEIGTTLKVDEIFEVGQRVDAQGRSRGRGFSGVIRRWSFAGAVNSHGTHEYFRHGGSIGTNMTPGRTLPGLKMPGHYGDETVSALNLKIAKLLPEDNLILIEGPVPGPKNQVVTIRGAVKKRGGKGIVPVQQPTKKKGG</sequence>
<evidence type="ECO:0000255" key="1">
    <source>
        <dbReference type="HAMAP-Rule" id="MF_01325"/>
    </source>
</evidence>
<evidence type="ECO:0000305" key="2"/>
<proteinExistence type="inferred from homology"/>
<reference key="1">
    <citation type="journal article" date="2007" name="Nat. Biotechnol.">
        <title>Complete genome sequence of the myxobacterium Sorangium cellulosum.</title>
        <authorList>
            <person name="Schneiker S."/>
            <person name="Perlova O."/>
            <person name="Kaiser O."/>
            <person name="Gerth K."/>
            <person name="Alici A."/>
            <person name="Altmeyer M.O."/>
            <person name="Bartels D."/>
            <person name="Bekel T."/>
            <person name="Beyer S."/>
            <person name="Bode E."/>
            <person name="Bode H.B."/>
            <person name="Bolten C.J."/>
            <person name="Choudhuri J.V."/>
            <person name="Doss S."/>
            <person name="Elnakady Y.A."/>
            <person name="Frank B."/>
            <person name="Gaigalat L."/>
            <person name="Goesmann A."/>
            <person name="Groeger C."/>
            <person name="Gross F."/>
            <person name="Jelsbak L."/>
            <person name="Jelsbak L."/>
            <person name="Kalinowski J."/>
            <person name="Kegler C."/>
            <person name="Knauber T."/>
            <person name="Konietzny S."/>
            <person name="Kopp M."/>
            <person name="Krause L."/>
            <person name="Krug D."/>
            <person name="Linke B."/>
            <person name="Mahmud T."/>
            <person name="Martinez-Arias R."/>
            <person name="McHardy A.C."/>
            <person name="Merai M."/>
            <person name="Meyer F."/>
            <person name="Mormann S."/>
            <person name="Munoz-Dorado J."/>
            <person name="Perez J."/>
            <person name="Pradella S."/>
            <person name="Rachid S."/>
            <person name="Raddatz G."/>
            <person name="Rosenau F."/>
            <person name="Rueckert C."/>
            <person name="Sasse F."/>
            <person name="Scharfe M."/>
            <person name="Schuster S.C."/>
            <person name="Suen G."/>
            <person name="Treuner-Lange A."/>
            <person name="Velicer G.J."/>
            <person name="Vorholter F.-J."/>
            <person name="Weissman K.J."/>
            <person name="Welch R.D."/>
            <person name="Wenzel S.C."/>
            <person name="Whitworth D.E."/>
            <person name="Wilhelm S."/>
            <person name="Wittmann C."/>
            <person name="Bloecker H."/>
            <person name="Puehler A."/>
            <person name="Mueller R."/>
        </authorList>
    </citation>
    <scope>NUCLEOTIDE SEQUENCE [LARGE SCALE GENOMIC DNA]</scope>
    <source>
        <strain>So ce56</strain>
    </source>
</reference>
<accession>A9FQE0</accession>
<name>RL3_SORC5</name>
<protein>
    <recommendedName>
        <fullName evidence="1">Large ribosomal subunit protein uL3</fullName>
    </recommendedName>
    <alternativeName>
        <fullName evidence="2">50S ribosomal protein L3</fullName>
    </alternativeName>
</protein>
<keyword id="KW-1185">Reference proteome</keyword>
<keyword id="KW-0687">Ribonucleoprotein</keyword>
<keyword id="KW-0689">Ribosomal protein</keyword>
<keyword id="KW-0694">RNA-binding</keyword>
<keyword id="KW-0699">rRNA-binding</keyword>